<sequence length="1368" mass="153151">MQYSFTEKKRIRKSFAKRSIVHQVPFLLATQLESFSTFLQADVPTAQRKSEGLQAAFTSVFPIVSHNGFARLEFVSYALSSPAFNIKECQQRGLTYCSALRAKVRLVLLDKESPSKPVVKEVKEQEVYMGEIPLMTPTGSFVINGTERVIVSQLHRSPGVFFEHDKGKTHSSGKLLFSARIIPYRGSWLDFEFDPKDVLYFRVDRRRKMPVTILLKAIGLTPEQILANFFVFDNFTLMDEGAQMEFVPERLRGEVARFDITDREGKVIVQKDKRINAKHIRDLEAAKTKYISVPEDYLLGRVLAKNVVDGDTGEVIANANDEITEGVLEKLREAKIKEIQTLYTNDLDQGPYISSTLRVDETVDKTAARIAIYRMMRPGEPPTEEAVEALFNRLFYSEDAYDLSKVGRMKFNRRVGRDEITGPMTLQDDDILATIKILVELRNGKGEVDDIDHLGNRRVRCVGELAENQFRAGLVRVERAVKERLGQAESENLMPHDLINSKPISSAIREFFGSSQLSQFMDQTNPLSEITHKRRVSALGPGGLTRERAGFEVRDVHPTHYGRVCPIETPEGPNIGLINSLALYAHLNEYGFLETPYRKVVDSKVTDQIDYLSAIEEGRYMIAQANAAIGDDGALVDELVSSREAGETMMVTPDRIQYMDVAPSQIVSVAASLIPFLEHDDANRALMGSNMQRQAVPCLRPEKPVVGTGIERTVAVDSGTTVQALRGGVVDYVDAGRIVIRVNDDEAVAGEVGVDIYNLIKYTRSNQNTNINQRPIVKMGDKVSRGDVLADGASTDLGELALGQNMLIAFMPWNGYNFEDSILISERVVADDRYTSIHIEELNVVARDTKLGPEEITRDISNLAEVQLGRLDESGIVYIGAEVEAGDVLVGKVTPKGETQLTPEEKLLRAIFGEKASDVKDTSLRVPSGMSGTVIDVQVFTREGIQRDKRAQQIIDDELKRYRLDLNDQLRIVEGDAFQRLARMLVGKVANGGPKKLAKGTKIDQAYLEDLDHYHWFDIRLADDEAAVQLEAIKNSIEEKRHQFDLAFEEKRKKLTQGDELPPGVLKMVKVYLAVKRRLQPGDKMAGRHGNKGVVSKIVPVEDMPYMADGRPADVVLNPLGVPSRMNVGQVLEVHLGWAAKGLGWRIGEMLARQTKIEELRVFLTKIYNESGRAEDLESFSDDEILELAKNLREGVPFATPVFDGATEEEMSKMLDLAFPDDIAEQLDMNPSKNQVRLYDGRTGEPFERRVTVGYMHYLKLHHLVDDKMHARSTGPYSLVTQQPLGGKAQFGGQRFGEMEVWALEAYGASYVLQEMLTVKSDDVTGRTKVYENLVKGDHVIDAGMPESFNVLVKEIRSLGIDIDLDRN</sequence>
<feature type="chain" id="PRO_0000224037" description="DNA-directed RNA polymerase subunit beta">
    <location>
        <begin position="1"/>
        <end position="1368"/>
    </location>
</feature>
<accession>P0C151</accession>
<evidence type="ECO:0000255" key="1">
    <source>
        <dbReference type="HAMAP-Rule" id="MF_01321"/>
    </source>
</evidence>
<dbReference type="EC" id="2.7.7.6" evidence="1"/>
<dbReference type="EMBL" id="CP000010">
    <property type="status" value="NOT_ANNOTATED_CDS"/>
    <property type="molecule type" value="Genomic_DNA"/>
</dbReference>
<dbReference type="RefSeq" id="WP_004198365.1">
    <property type="nucleotide sequence ID" value="NC_006348.1"/>
</dbReference>
<dbReference type="SMR" id="P0C151"/>
<dbReference type="GeneID" id="92980328"/>
<dbReference type="Proteomes" id="UP000006693">
    <property type="component" value="Chromosome 1"/>
</dbReference>
<dbReference type="GO" id="GO:0000428">
    <property type="term" value="C:DNA-directed RNA polymerase complex"/>
    <property type="evidence" value="ECO:0007669"/>
    <property type="project" value="UniProtKB-KW"/>
</dbReference>
<dbReference type="GO" id="GO:0003677">
    <property type="term" value="F:DNA binding"/>
    <property type="evidence" value="ECO:0007669"/>
    <property type="project" value="UniProtKB-UniRule"/>
</dbReference>
<dbReference type="GO" id="GO:0003899">
    <property type="term" value="F:DNA-directed RNA polymerase activity"/>
    <property type="evidence" value="ECO:0007669"/>
    <property type="project" value="UniProtKB-UniRule"/>
</dbReference>
<dbReference type="GO" id="GO:0032549">
    <property type="term" value="F:ribonucleoside binding"/>
    <property type="evidence" value="ECO:0007669"/>
    <property type="project" value="InterPro"/>
</dbReference>
<dbReference type="GO" id="GO:0006351">
    <property type="term" value="P:DNA-templated transcription"/>
    <property type="evidence" value="ECO:0007669"/>
    <property type="project" value="UniProtKB-UniRule"/>
</dbReference>
<dbReference type="CDD" id="cd00653">
    <property type="entry name" value="RNA_pol_B_RPB2"/>
    <property type="match status" value="1"/>
</dbReference>
<dbReference type="FunFam" id="2.40.50.100:FF:000006">
    <property type="entry name" value="DNA-directed RNA polymerase subunit beta"/>
    <property type="match status" value="1"/>
</dbReference>
<dbReference type="FunFam" id="2.40.50.150:FF:000001">
    <property type="entry name" value="DNA-directed RNA polymerase subunit beta"/>
    <property type="match status" value="1"/>
</dbReference>
<dbReference type="FunFam" id="3.90.1110.10:FF:000004">
    <property type="entry name" value="DNA-directed RNA polymerase subunit beta"/>
    <property type="match status" value="1"/>
</dbReference>
<dbReference type="FunFam" id="3.90.1800.10:FF:000001">
    <property type="entry name" value="DNA-directed RNA polymerase subunit beta"/>
    <property type="match status" value="1"/>
</dbReference>
<dbReference type="Gene3D" id="2.40.50.100">
    <property type="match status" value="1"/>
</dbReference>
<dbReference type="Gene3D" id="2.40.50.150">
    <property type="match status" value="1"/>
</dbReference>
<dbReference type="Gene3D" id="3.90.1100.10">
    <property type="match status" value="2"/>
</dbReference>
<dbReference type="Gene3D" id="2.30.150.10">
    <property type="entry name" value="DNA-directed RNA polymerase, beta subunit, external 1 domain"/>
    <property type="match status" value="1"/>
</dbReference>
<dbReference type="Gene3D" id="2.40.270.10">
    <property type="entry name" value="DNA-directed RNA polymerase, subunit 2, domain 6"/>
    <property type="match status" value="2"/>
</dbReference>
<dbReference type="Gene3D" id="3.90.1800.10">
    <property type="entry name" value="RNA polymerase alpha subunit dimerisation domain"/>
    <property type="match status" value="1"/>
</dbReference>
<dbReference type="Gene3D" id="3.90.1110.10">
    <property type="entry name" value="RNA polymerase Rpb2, domain 2"/>
    <property type="match status" value="2"/>
</dbReference>
<dbReference type="HAMAP" id="MF_01321">
    <property type="entry name" value="RNApol_bact_RpoB"/>
    <property type="match status" value="1"/>
</dbReference>
<dbReference type="InterPro" id="IPR042107">
    <property type="entry name" value="DNA-dir_RNA_pol_bsu_ext_1_sf"/>
</dbReference>
<dbReference type="InterPro" id="IPR019462">
    <property type="entry name" value="DNA-dir_RNA_pol_bsu_external_1"/>
</dbReference>
<dbReference type="InterPro" id="IPR015712">
    <property type="entry name" value="DNA-dir_RNA_pol_su2"/>
</dbReference>
<dbReference type="InterPro" id="IPR007120">
    <property type="entry name" value="DNA-dir_RNAP_su2_dom"/>
</dbReference>
<dbReference type="InterPro" id="IPR037033">
    <property type="entry name" value="DNA-dir_RNAP_su2_hyb_sf"/>
</dbReference>
<dbReference type="InterPro" id="IPR010243">
    <property type="entry name" value="RNA_pol_bsu_bac"/>
</dbReference>
<dbReference type="InterPro" id="IPR007121">
    <property type="entry name" value="RNA_pol_bsu_CS"/>
</dbReference>
<dbReference type="InterPro" id="IPR007644">
    <property type="entry name" value="RNA_pol_bsu_protrusion"/>
</dbReference>
<dbReference type="InterPro" id="IPR007642">
    <property type="entry name" value="RNA_pol_Rpb2_2"/>
</dbReference>
<dbReference type="InterPro" id="IPR037034">
    <property type="entry name" value="RNA_pol_Rpb2_2_sf"/>
</dbReference>
<dbReference type="InterPro" id="IPR007645">
    <property type="entry name" value="RNA_pol_Rpb2_3"/>
</dbReference>
<dbReference type="InterPro" id="IPR007641">
    <property type="entry name" value="RNA_pol_Rpb2_7"/>
</dbReference>
<dbReference type="InterPro" id="IPR014724">
    <property type="entry name" value="RNA_pol_RPB2_OB-fold"/>
</dbReference>
<dbReference type="NCBIfam" id="NF001616">
    <property type="entry name" value="PRK00405.1"/>
    <property type="match status" value="1"/>
</dbReference>
<dbReference type="NCBIfam" id="TIGR02013">
    <property type="entry name" value="rpoB"/>
    <property type="match status" value="1"/>
</dbReference>
<dbReference type="PANTHER" id="PTHR20856">
    <property type="entry name" value="DNA-DIRECTED RNA POLYMERASE I SUBUNIT 2"/>
    <property type="match status" value="1"/>
</dbReference>
<dbReference type="Pfam" id="PF04563">
    <property type="entry name" value="RNA_pol_Rpb2_1"/>
    <property type="match status" value="1"/>
</dbReference>
<dbReference type="Pfam" id="PF04561">
    <property type="entry name" value="RNA_pol_Rpb2_2"/>
    <property type="match status" value="2"/>
</dbReference>
<dbReference type="Pfam" id="PF04565">
    <property type="entry name" value="RNA_pol_Rpb2_3"/>
    <property type="match status" value="1"/>
</dbReference>
<dbReference type="Pfam" id="PF10385">
    <property type="entry name" value="RNA_pol_Rpb2_45"/>
    <property type="match status" value="1"/>
</dbReference>
<dbReference type="Pfam" id="PF00562">
    <property type="entry name" value="RNA_pol_Rpb2_6"/>
    <property type="match status" value="1"/>
</dbReference>
<dbReference type="Pfam" id="PF04560">
    <property type="entry name" value="RNA_pol_Rpb2_7"/>
    <property type="match status" value="1"/>
</dbReference>
<dbReference type="SUPFAM" id="SSF64484">
    <property type="entry name" value="beta and beta-prime subunits of DNA dependent RNA-polymerase"/>
    <property type="match status" value="1"/>
</dbReference>
<dbReference type="PROSITE" id="PS01166">
    <property type="entry name" value="RNA_POL_BETA"/>
    <property type="match status" value="1"/>
</dbReference>
<organism>
    <name type="scientific">Burkholderia mallei (strain ATCC 23344)</name>
    <dbReference type="NCBI Taxonomy" id="243160"/>
    <lineage>
        <taxon>Bacteria</taxon>
        <taxon>Pseudomonadati</taxon>
        <taxon>Pseudomonadota</taxon>
        <taxon>Betaproteobacteria</taxon>
        <taxon>Burkholderiales</taxon>
        <taxon>Burkholderiaceae</taxon>
        <taxon>Burkholderia</taxon>
        <taxon>pseudomallei group</taxon>
    </lineage>
</organism>
<name>RPOB_BURMA</name>
<proteinExistence type="inferred from homology"/>
<comment type="function">
    <text evidence="1">DNA-dependent RNA polymerase catalyzes the transcription of DNA into RNA using the four ribonucleoside triphosphates as substrates.</text>
</comment>
<comment type="catalytic activity">
    <reaction evidence="1">
        <text>RNA(n) + a ribonucleoside 5'-triphosphate = RNA(n+1) + diphosphate</text>
        <dbReference type="Rhea" id="RHEA:21248"/>
        <dbReference type="Rhea" id="RHEA-COMP:14527"/>
        <dbReference type="Rhea" id="RHEA-COMP:17342"/>
        <dbReference type="ChEBI" id="CHEBI:33019"/>
        <dbReference type="ChEBI" id="CHEBI:61557"/>
        <dbReference type="ChEBI" id="CHEBI:140395"/>
        <dbReference type="EC" id="2.7.7.6"/>
    </reaction>
</comment>
<comment type="subunit">
    <text evidence="1">The RNAP catalytic core consists of 2 alpha, 1 beta, 1 beta' and 1 omega subunit. When a sigma factor is associated with the core the holoenzyme is formed, which can initiate transcription.</text>
</comment>
<comment type="similarity">
    <text evidence="1">Belongs to the RNA polymerase beta chain family.</text>
</comment>
<protein>
    <recommendedName>
        <fullName evidence="1">DNA-directed RNA polymerase subunit beta</fullName>
        <shortName evidence="1">RNAP subunit beta</shortName>
        <ecNumber evidence="1">2.7.7.6</ecNumber>
    </recommendedName>
    <alternativeName>
        <fullName evidence="1">RNA polymerase subunit beta</fullName>
    </alternativeName>
    <alternativeName>
        <fullName evidence="1">Transcriptase subunit beta</fullName>
    </alternativeName>
</protein>
<keyword id="KW-0240">DNA-directed RNA polymerase</keyword>
<keyword id="KW-0548">Nucleotidyltransferase</keyword>
<keyword id="KW-1185">Reference proteome</keyword>
<keyword id="KW-0804">Transcription</keyword>
<keyword id="KW-0808">Transferase</keyword>
<reference key="1">
    <citation type="journal article" date="2004" name="Proc. Natl. Acad. Sci. U.S.A.">
        <title>Structural flexibility in the Burkholderia mallei genome.</title>
        <authorList>
            <person name="Nierman W.C."/>
            <person name="DeShazer D."/>
            <person name="Kim H.S."/>
            <person name="Tettelin H."/>
            <person name="Nelson K.E."/>
            <person name="Feldblyum T.V."/>
            <person name="Ulrich R.L."/>
            <person name="Ronning C.M."/>
            <person name="Brinkac L.M."/>
            <person name="Daugherty S.C."/>
            <person name="Davidsen T.D."/>
            <person name="DeBoy R.T."/>
            <person name="Dimitrov G."/>
            <person name="Dodson R.J."/>
            <person name="Durkin A.S."/>
            <person name="Gwinn M.L."/>
            <person name="Haft D.H."/>
            <person name="Khouri H.M."/>
            <person name="Kolonay J.F."/>
            <person name="Madupu R."/>
            <person name="Mohammoud Y."/>
            <person name="Nelson W.C."/>
            <person name="Radune D."/>
            <person name="Romero C.M."/>
            <person name="Sarria S."/>
            <person name="Selengut J."/>
            <person name="Shamblin C."/>
            <person name="Sullivan S.A."/>
            <person name="White O."/>
            <person name="Yu Y."/>
            <person name="Zafar N."/>
            <person name="Zhou L."/>
            <person name="Fraser C.M."/>
        </authorList>
    </citation>
    <scope>NUCLEOTIDE SEQUENCE [LARGE SCALE GENOMIC DNA]</scope>
    <source>
        <strain>ATCC 23344</strain>
    </source>
</reference>
<gene>
    <name evidence="1" type="primary">rpoB</name>
    <name type="ordered locus">BMA2641</name>
</gene>